<reference key="1">
    <citation type="journal article" date="2011" name="J. Bacteriol.">
        <title>Comparative genomics of 28 Salmonella enterica isolates: evidence for CRISPR-mediated adaptive sublineage evolution.</title>
        <authorList>
            <person name="Fricke W.F."/>
            <person name="Mammel M.K."/>
            <person name="McDermott P.F."/>
            <person name="Tartera C."/>
            <person name="White D.G."/>
            <person name="Leclerc J.E."/>
            <person name="Ravel J."/>
            <person name="Cebula T.A."/>
        </authorList>
    </citation>
    <scope>NUCLEOTIDE SEQUENCE [LARGE SCALE GENOMIC DNA]</scope>
    <source>
        <strain>SL476</strain>
    </source>
</reference>
<name>ENO_SALHS</name>
<accession>B4TFZ1</accession>
<feature type="chain" id="PRO_1000115910" description="Enolase">
    <location>
        <begin position="1"/>
        <end position="432"/>
    </location>
</feature>
<feature type="active site" description="Proton donor" evidence="1">
    <location>
        <position position="209"/>
    </location>
</feature>
<feature type="active site" description="Proton acceptor" evidence="1">
    <location>
        <position position="342"/>
    </location>
</feature>
<feature type="binding site" evidence="1">
    <location>
        <position position="167"/>
    </location>
    <ligand>
        <name>(2R)-2-phosphoglycerate</name>
        <dbReference type="ChEBI" id="CHEBI:58289"/>
    </ligand>
</feature>
<feature type="binding site" evidence="1">
    <location>
        <position position="246"/>
    </location>
    <ligand>
        <name>Mg(2+)</name>
        <dbReference type="ChEBI" id="CHEBI:18420"/>
    </ligand>
</feature>
<feature type="binding site" evidence="1">
    <location>
        <position position="290"/>
    </location>
    <ligand>
        <name>Mg(2+)</name>
        <dbReference type="ChEBI" id="CHEBI:18420"/>
    </ligand>
</feature>
<feature type="binding site" evidence="1">
    <location>
        <position position="317"/>
    </location>
    <ligand>
        <name>Mg(2+)</name>
        <dbReference type="ChEBI" id="CHEBI:18420"/>
    </ligand>
</feature>
<feature type="binding site" evidence="1">
    <location>
        <position position="342"/>
    </location>
    <ligand>
        <name>(2R)-2-phosphoglycerate</name>
        <dbReference type="ChEBI" id="CHEBI:58289"/>
    </ligand>
</feature>
<feature type="binding site" evidence="1">
    <location>
        <position position="371"/>
    </location>
    <ligand>
        <name>(2R)-2-phosphoglycerate</name>
        <dbReference type="ChEBI" id="CHEBI:58289"/>
    </ligand>
</feature>
<feature type="binding site" evidence="1">
    <location>
        <position position="372"/>
    </location>
    <ligand>
        <name>(2R)-2-phosphoglycerate</name>
        <dbReference type="ChEBI" id="CHEBI:58289"/>
    </ligand>
</feature>
<feature type="binding site" evidence="1">
    <location>
        <position position="393"/>
    </location>
    <ligand>
        <name>(2R)-2-phosphoglycerate</name>
        <dbReference type="ChEBI" id="CHEBI:58289"/>
    </ligand>
</feature>
<comment type="function">
    <text evidence="1">Catalyzes the reversible conversion of 2-phosphoglycerate (2-PG) into phosphoenolpyruvate (PEP). It is essential for the degradation of carbohydrates via glycolysis.</text>
</comment>
<comment type="catalytic activity">
    <reaction evidence="1">
        <text>(2R)-2-phosphoglycerate = phosphoenolpyruvate + H2O</text>
        <dbReference type="Rhea" id="RHEA:10164"/>
        <dbReference type="ChEBI" id="CHEBI:15377"/>
        <dbReference type="ChEBI" id="CHEBI:58289"/>
        <dbReference type="ChEBI" id="CHEBI:58702"/>
        <dbReference type="EC" id="4.2.1.11"/>
    </reaction>
</comment>
<comment type="cofactor">
    <cofactor evidence="1">
        <name>Mg(2+)</name>
        <dbReference type="ChEBI" id="CHEBI:18420"/>
    </cofactor>
    <text evidence="1">Binds a second Mg(2+) ion via substrate during catalysis.</text>
</comment>
<comment type="pathway">
    <text evidence="1">Carbohydrate degradation; glycolysis; pyruvate from D-glyceraldehyde 3-phosphate: step 4/5.</text>
</comment>
<comment type="subunit">
    <text evidence="1">Component of the RNA degradosome, a multiprotein complex involved in RNA processing and mRNA degradation.</text>
</comment>
<comment type="subcellular location">
    <subcellularLocation>
        <location evidence="1">Cytoplasm</location>
    </subcellularLocation>
    <subcellularLocation>
        <location evidence="1">Secreted</location>
    </subcellularLocation>
    <subcellularLocation>
        <location evidence="1">Cell surface</location>
    </subcellularLocation>
    <text evidence="1">Fractions of enolase are present in both the cytoplasm and on the cell surface.</text>
</comment>
<comment type="similarity">
    <text evidence="1">Belongs to the enolase family.</text>
</comment>
<organism>
    <name type="scientific">Salmonella heidelberg (strain SL476)</name>
    <dbReference type="NCBI Taxonomy" id="454169"/>
    <lineage>
        <taxon>Bacteria</taxon>
        <taxon>Pseudomonadati</taxon>
        <taxon>Pseudomonadota</taxon>
        <taxon>Gammaproteobacteria</taxon>
        <taxon>Enterobacterales</taxon>
        <taxon>Enterobacteriaceae</taxon>
        <taxon>Salmonella</taxon>
    </lineage>
</organism>
<keyword id="KW-0963">Cytoplasm</keyword>
<keyword id="KW-0324">Glycolysis</keyword>
<keyword id="KW-0456">Lyase</keyword>
<keyword id="KW-0460">Magnesium</keyword>
<keyword id="KW-0479">Metal-binding</keyword>
<keyword id="KW-0964">Secreted</keyword>
<dbReference type="EC" id="4.2.1.11" evidence="1"/>
<dbReference type="EMBL" id="CP001120">
    <property type="protein sequence ID" value="ACF68308.1"/>
    <property type="molecule type" value="Genomic_DNA"/>
</dbReference>
<dbReference type="RefSeq" id="WP_000036734.1">
    <property type="nucleotide sequence ID" value="NC_011083.1"/>
</dbReference>
<dbReference type="SMR" id="B4TFZ1"/>
<dbReference type="GeneID" id="66757270"/>
<dbReference type="KEGG" id="seh:SeHA_C3149"/>
<dbReference type="HOGENOM" id="CLU_031223_2_1_6"/>
<dbReference type="UniPathway" id="UPA00109">
    <property type="reaction ID" value="UER00187"/>
</dbReference>
<dbReference type="Proteomes" id="UP000001866">
    <property type="component" value="Chromosome"/>
</dbReference>
<dbReference type="GO" id="GO:0009986">
    <property type="term" value="C:cell surface"/>
    <property type="evidence" value="ECO:0007669"/>
    <property type="project" value="UniProtKB-SubCell"/>
</dbReference>
<dbReference type="GO" id="GO:0005576">
    <property type="term" value="C:extracellular region"/>
    <property type="evidence" value="ECO:0007669"/>
    <property type="project" value="UniProtKB-SubCell"/>
</dbReference>
<dbReference type="GO" id="GO:0000015">
    <property type="term" value="C:phosphopyruvate hydratase complex"/>
    <property type="evidence" value="ECO:0007669"/>
    <property type="project" value="InterPro"/>
</dbReference>
<dbReference type="GO" id="GO:0000287">
    <property type="term" value="F:magnesium ion binding"/>
    <property type="evidence" value="ECO:0007669"/>
    <property type="project" value="UniProtKB-UniRule"/>
</dbReference>
<dbReference type="GO" id="GO:0004634">
    <property type="term" value="F:phosphopyruvate hydratase activity"/>
    <property type="evidence" value="ECO:0007669"/>
    <property type="project" value="UniProtKB-UniRule"/>
</dbReference>
<dbReference type="GO" id="GO:0006096">
    <property type="term" value="P:glycolytic process"/>
    <property type="evidence" value="ECO:0007669"/>
    <property type="project" value="UniProtKB-UniRule"/>
</dbReference>
<dbReference type="CDD" id="cd03313">
    <property type="entry name" value="enolase"/>
    <property type="match status" value="1"/>
</dbReference>
<dbReference type="FunFam" id="3.20.20.120:FF:000001">
    <property type="entry name" value="Enolase"/>
    <property type="match status" value="1"/>
</dbReference>
<dbReference type="FunFam" id="3.30.390.10:FF:000001">
    <property type="entry name" value="Enolase"/>
    <property type="match status" value="1"/>
</dbReference>
<dbReference type="Gene3D" id="3.20.20.120">
    <property type="entry name" value="Enolase-like C-terminal domain"/>
    <property type="match status" value="1"/>
</dbReference>
<dbReference type="Gene3D" id="3.30.390.10">
    <property type="entry name" value="Enolase-like, N-terminal domain"/>
    <property type="match status" value="1"/>
</dbReference>
<dbReference type="HAMAP" id="MF_00318">
    <property type="entry name" value="Enolase"/>
    <property type="match status" value="1"/>
</dbReference>
<dbReference type="InterPro" id="IPR000941">
    <property type="entry name" value="Enolase"/>
</dbReference>
<dbReference type="InterPro" id="IPR036849">
    <property type="entry name" value="Enolase-like_C_sf"/>
</dbReference>
<dbReference type="InterPro" id="IPR029017">
    <property type="entry name" value="Enolase-like_N"/>
</dbReference>
<dbReference type="InterPro" id="IPR020810">
    <property type="entry name" value="Enolase_C"/>
</dbReference>
<dbReference type="InterPro" id="IPR020809">
    <property type="entry name" value="Enolase_CS"/>
</dbReference>
<dbReference type="InterPro" id="IPR020811">
    <property type="entry name" value="Enolase_N"/>
</dbReference>
<dbReference type="NCBIfam" id="TIGR01060">
    <property type="entry name" value="eno"/>
    <property type="match status" value="1"/>
</dbReference>
<dbReference type="PANTHER" id="PTHR11902">
    <property type="entry name" value="ENOLASE"/>
    <property type="match status" value="1"/>
</dbReference>
<dbReference type="PANTHER" id="PTHR11902:SF1">
    <property type="entry name" value="ENOLASE"/>
    <property type="match status" value="1"/>
</dbReference>
<dbReference type="Pfam" id="PF00113">
    <property type="entry name" value="Enolase_C"/>
    <property type="match status" value="1"/>
</dbReference>
<dbReference type="Pfam" id="PF03952">
    <property type="entry name" value="Enolase_N"/>
    <property type="match status" value="1"/>
</dbReference>
<dbReference type="PIRSF" id="PIRSF001400">
    <property type="entry name" value="Enolase"/>
    <property type="match status" value="1"/>
</dbReference>
<dbReference type="PRINTS" id="PR00148">
    <property type="entry name" value="ENOLASE"/>
</dbReference>
<dbReference type="SFLD" id="SFLDF00002">
    <property type="entry name" value="enolase"/>
    <property type="match status" value="1"/>
</dbReference>
<dbReference type="SFLD" id="SFLDG00178">
    <property type="entry name" value="enolase"/>
    <property type="match status" value="1"/>
</dbReference>
<dbReference type="SMART" id="SM01192">
    <property type="entry name" value="Enolase_C"/>
    <property type="match status" value="1"/>
</dbReference>
<dbReference type="SMART" id="SM01193">
    <property type="entry name" value="Enolase_N"/>
    <property type="match status" value="1"/>
</dbReference>
<dbReference type="SUPFAM" id="SSF51604">
    <property type="entry name" value="Enolase C-terminal domain-like"/>
    <property type="match status" value="1"/>
</dbReference>
<dbReference type="SUPFAM" id="SSF54826">
    <property type="entry name" value="Enolase N-terminal domain-like"/>
    <property type="match status" value="1"/>
</dbReference>
<dbReference type="PROSITE" id="PS00164">
    <property type="entry name" value="ENOLASE"/>
    <property type="match status" value="1"/>
</dbReference>
<sequence length="432" mass="45599">MSKIVKVIGREIIDSRGNPTVEAEVHLEGGFVGMAAAPSGASTGSREALELRDGDKSRFLGKGVTKAVGAVNGPIAQAILGKDAKDQAGIDKIMIDLDGTENKSNFGANAILAVSLANAKAAAAAKGMPLYEHIAELNGTPGKYSMPVPMMNIINGGEHADNNVDIQEFMIQPVGAKTVKEAIRMGSEVFHHLAKVLKGKGMNTAVGDEGGYAPNLGSNAEALAVIAEAVKAAGYELGKDITLAMDCAASEFYKDGKYVLAGEGNKAFTSEEFTHFLEELTKQYPIVSIEDGLDESDWDGFAYQTKVLGDKIQLVGDDLFVTNTKILKEGIEKGIANSILIKFNQIGSLTETLAAIKMAKDAGYTAVISHRSGETEDATIADLAVGTAAGQIKTGSMSRSDRVAKYNQLIRIEEALGEKAPYNGRKEIKGQA</sequence>
<evidence type="ECO:0000255" key="1">
    <source>
        <dbReference type="HAMAP-Rule" id="MF_00318"/>
    </source>
</evidence>
<proteinExistence type="inferred from homology"/>
<protein>
    <recommendedName>
        <fullName evidence="1">Enolase</fullName>
        <ecNumber evidence="1">4.2.1.11</ecNumber>
    </recommendedName>
    <alternativeName>
        <fullName evidence="1">2-phospho-D-glycerate hydro-lyase</fullName>
    </alternativeName>
    <alternativeName>
        <fullName evidence="1">2-phosphoglycerate dehydratase</fullName>
    </alternativeName>
</protein>
<gene>
    <name evidence="1" type="primary">eno</name>
    <name type="ordered locus">SeHA_C3149</name>
</gene>